<keyword id="KW-0414">Isoprene biosynthesis</keyword>
<keyword id="KW-0456">Lyase</keyword>
<keyword id="KW-1185">Reference proteome</keyword>
<organism>
    <name type="scientific">Methanopyrus kandleri (strain AV19 / DSM 6324 / JCM 9639 / NBRC 100938)</name>
    <dbReference type="NCBI Taxonomy" id="190192"/>
    <lineage>
        <taxon>Archaea</taxon>
        <taxon>Methanobacteriati</taxon>
        <taxon>Methanobacteriota</taxon>
        <taxon>Methanomada group</taxon>
        <taxon>Methanopyri</taxon>
        <taxon>Methanopyrales</taxon>
        <taxon>Methanopyraceae</taxon>
        <taxon>Methanopyrus</taxon>
    </lineage>
</organism>
<dbReference type="EC" id="4.2.1.182" evidence="2"/>
<dbReference type="EMBL" id="AE009439">
    <property type="protein sequence ID" value="AAM02699.1"/>
    <property type="molecule type" value="Genomic_DNA"/>
</dbReference>
<dbReference type="RefSeq" id="WP_011019854.1">
    <property type="nucleotide sequence ID" value="NC_003551.1"/>
</dbReference>
<dbReference type="SMR" id="Q8TVA6"/>
<dbReference type="FunCoup" id="Q8TVA6">
    <property type="interactions" value="11"/>
</dbReference>
<dbReference type="STRING" id="190192.MK1486"/>
<dbReference type="PaxDb" id="190192-MK1486"/>
<dbReference type="EnsemblBacteria" id="AAM02699">
    <property type="protein sequence ID" value="AAM02699"/>
    <property type="gene ID" value="MK1486"/>
</dbReference>
<dbReference type="GeneID" id="1478081"/>
<dbReference type="KEGG" id="mka:MK1486"/>
<dbReference type="PATRIC" id="fig|190192.8.peg.1644"/>
<dbReference type="HOGENOM" id="CLU_141583_2_0_2"/>
<dbReference type="InParanoid" id="Q8TVA6"/>
<dbReference type="OrthoDB" id="18062at2157"/>
<dbReference type="UniPathway" id="UPA00057"/>
<dbReference type="Proteomes" id="UP000001826">
    <property type="component" value="Chromosome"/>
</dbReference>
<dbReference type="GO" id="GO:0016836">
    <property type="term" value="F:hydro-lyase activity"/>
    <property type="evidence" value="ECO:0007669"/>
    <property type="project" value="UniProtKB-UniRule"/>
</dbReference>
<dbReference type="GO" id="GO:0019287">
    <property type="term" value="P:isopentenyl diphosphate biosynthetic process, mevalonate pathway"/>
    <property type="evidence" value="ECO:0007669"/>
    <property type="project" value="UniProtKB-UniRule"/>
</dbReference>
<dbReference type="CDD" id="cd01356">
    <property type="entry name" value="AcnX_swivel"/>
    <property type="match status" value="1"/>
</dbReference>
<dbReference type="Gene3D" id="3.50.30.10">
    <property type="entry name" value="Phosphohistidine domain"/>
    <property type="match status" value="1"/>
</dbReference>
<dbReference type="InterPro" id="IPR012016">
    <property type="entry name" value="PMDh-S-like"/>
</dbReference>
<dbReference type="InterPro" id="IPR002840">
    <property type="entry name" value="PMDh-S-like_dom"/>
</dbReference>
<dbReference type="InterPro" id="IPR020794">
    <property type="entry name" value="PMDh_S"/>
</dbReference>
<dbReference type="PANTHER" id="PTHR36577">
    <property type="entry name" value="DUF521 DOMAIN PROTEIN (AFU_ORTHOLOGUE AFUA_6G00490)"/>
    <property type="match status" value="1"/>
</dbReference>
<dbReference type="PANTHER" id="PTHR36577:SF3">
    <property type="entry name" value="DUF521 DOMAIN PROTEIN (AFU_ORTHOLOGUE AFUA_6G00490)"/>
    <property type="match status" value="1"/>
</dbReference>
<dbReference type="Pfam" id="PF01989">
    <property type="entry name" value="AcnX_swivel_put"/>
    <property type="match status" value="1"/>
</dbReference>
<dbReference type="PIRSF" id="PIRSF004966">
    <property type="entry name" value="UCP004966"/>
    <property type="match status" value="1"/>
</dbReference>
<dbReference type="SUPFAM" id="SSF52016">
    <property type="entry name" value="LeuD/IlvD-like"/>
    <property type="match status" value="1"/>
</dbReference>
<reference key="1">
    <citation type="journal article" date="2002" name="Proc. Natl. Acad. Sci. U.S.A.">
        <title>The complete genome of hyperthermophile Methanopyrus kandleri AV19 and monophyly of archaeal methanogens.</title>
        <authorList>
            <person name="Slesarev A.I."/>
            <person name="Mezhevaya K.V."/>
            <person name="Makarova K.S."/>
            <person name="Polushin N.N."/>
            <person name="Shcherbinina O.V."/>
            <person name="Shakhova V.V."/>
            <person name="Belova G.I."/>
            <person name="Aravind L."/>
            <person name="Natale D.A."/>
            <person name="Rogozin I.B."/>
            <person name="Tatusov R.L."/>
            <person name="Wolf Y.I."/>
            <person name="Stetter K.O."/>
            <person name="Malykh A.G."/>
            <person name="Koonin E.V."/>
            <person name="Kozyavkin S.A."/>
        </authorList>
    </citation>
    <scope>NUCLEOTIDE SEQUENCE [LARGE SCALE GENOMIC DNA]</scope>
    <source>
        <strain>AV19 / DSM 6324 / JCM 9639 / NBRC 100938</strain>
    </source>
</reference>
<protein>
    <recommendedName>
        <fullName evidence="2">Phosphomevalonate dehydratase small subunit</fullName>
        <shortName evidence="2">PMDh small subunit</shortName>
        <shortName evidence="2">PMDh-S</shortName>
        <ecNumber evidence="2">4.2.1.182</ecNumber>
    </recommendedName>
</protein>
<comment type="function">
    <text evidence="2">Component of a hydro-lyase that catalyzes the dehydration of mevalonate 5-phosphate (MVA5P) to form trans-anhydromevalonate 5-phosphate (tAHMP). Involved in the archaeal mevalonate (MVA) pathway, which provides fundamental precursors for isoprenoid biosynthesis, such as isopentenyl diphosphate (IPP) and dimethylallyl diphosphate (DMAPP).</text>
</comment>
<comment type="catalytic activity">
    <reaction evidence="2">
        <text>(R)-5-phosphomevalonate = (2E)-3-methyl-5-phosphooxypent-2-enoate + H2O</text>
        <dbReference type="Rhea" id="RHEA:78975"/>
        <dbReference type="ChEBI" id="CHEBI:15377"/>
        <dbReference type="ChEBI" id="CHEBI:58146"/>
        <dbReference type="ChEBI" id="CHEBI:229665"/>
        <dbReference type="EC" id="4.2.1.182"/>
    </reaction>
    <physiologicalReaction direction="left-to-right" evidence="2">
        <dbReference type="Rhea" id="RHEA:78976"/>
    </physiologicalReaction>
</comment>
<comment type="pathway">
    <text evidence="2">Isoprenoid biosynthesis; isopentenyl diphosphate biosynthesis via mevalonate pathway.</text>
</comment>
<comment type="subunit">
    <text evidence="2">Heterodimer composed of a large subunit (PMDh-L) and a small subunit (PMDh-S).</text>
</comment>
<comment type="similarity">
    <text evidence="3">Belongs to the AcnX type II small subunit family.</text>
</comment>
<sequence>MSVSPVRCEPVVDVEEPVEAEVLVSSQRLSFLGGVDPKTGEVVDPSHELCGEKLTGRVLVLPGGRGSTVGSYVLMEMADRGTAPAGIVVREAEPILVVGCVLGDIPLFHRPERDLVEELSTGDVVKLLPGGKVEV</sequence>
<accession>Q8TVA6</accession>
<proteinExistence type="inferred from homology"/>
<feature type="chain" id="PRO_0000152566" description="Phosphomevalonate dehydratase small subunit">
    <location>
        <begin position="1"/>
        <end position="135"/>
    </location>
</feature>
<feature type="active site" description="Proton acceptor" evidence="1">
    <location>
        <position position="67"/>
    </location>
</feature>
<evidence type="ECO:0000250" key="1">
    <source>
        <dbReference type="UniProtKB" id="Q9I485"/>
    </source>
</evidence>
<evidence type="ECO:0000250" key="2">
    <source>
        <dbReference type="UniProtKB" id="Q9YA49"/>
    </source>
</evidence>
<evidence type="ECO:0000305" key="3"/>
<gene>
    <name type="ordered locus">MK1486</name>
</gene>
<name>PMDHS_METKA</name>